<organism>
    <name type="scientific">Bacillus thuringiensis (strain Al Hakam)</name>
    <dbReference type="NCBI Taxonomy" id="412694"/>
    <lineage>
        <taxon>Bacteria</taxon>
        <taxon>Bacillati</taxon>
        <taxon>Bacillota</taxon>
        <taxon>Bacilli</taxon>
        <taxon>Bacillales</taxon>
        <taxon>Bacillaceae</taxon>
        <taxon>Bacillus</taxon>
        <taxon>Bacillus cereus group</taxon>
    </lineage>
</organism>
<accession>A0RCM7</accession>
<dbReference type="EC" id="3.5.4.28" evidence="1"/>
<dbReference type="EC" id="3.5.4.31" evidence="1"/>
<dbReference type="EMBL" id="CP000485">
    <property type="protein sequence ID" value="ABK84970.1"/>
    <property type="status" value="ALT_INIT"/>
    <property type="molecule type" value="Genomic_DNA"/>
</dbReference>
<dbReference type="SMR" id="A0RCM7"/>
<dbReference type="KEGG" id="btl:BALH_1643"/>
<dbReference type="HOGENOM" id="CLU_012358_2_0_9"/>
<dbReference type="GO" id="GO:0090614">
    <property type="term" value="F:5'-methylthioadenosine deaminase activity"/>
    <property type="evidence" value="ECO:0007669"/>
    <property type="project" value="UniProtKB-UniRule"/>
</dbReference>
<dbReference type="GO" id="GO:0046872">
    <property type="term" value="F:metal ion binding"/>
    <property type="evidence" value="ECO:0007669"/>
    <property type="project" value="UniProtKB-KW"/>
</dbReference>
<dbReference type="GO" id="GO:0050270">
    <property type="term" value="F:S-adenosylhomocysteine deaminase activity"/>
    <property type="evidence" value="ECO:0007669"/>
    <property type="project" value="UniProtKB-UniRule"/>
</dbReference>
<dbReference type="CDD" id="cd01298">
    <property type="entry name" value="ATZ_TRZ_like"/>
    <property type="match status" value="1"/>
</dbReference>
<dbReference type="FunFam" id="3.20.20.140:FF:000014">
    <property type="entry name" value="5-methylthioadenosine/S-adenosylhomocysteine deaminase"/>
    <property type="match status" value="1"/>
</dbReference>
<dbReference type="Gene3D" id="3.20.20.140">
    <property type="entry name" value="Metal-dependent hydrolases"/>
    <property type="match status" value="1"/>
</dbReference>
<dbReference type="Gene3D" id="2.30.40.10">
    <property type="entry name" value="Urease, subunit C, domain 1"/>
    <property type="match status" value="1"/>
</dbReference>
<dbReference type="HAMAP" id="MF_01281">
    <property type="entry name" value="MTA_SAH_deamin"/>
    <property type="match status" value="1"/>
</dbReference>
<dbReference type="InterPro" id="IPR006680">
    <property type="entry name" value="Amidohydro-rel"/>
</dbReference>
<dbReference type="InterPro" id="IPR023512">
    <property type="entry name" value="Deaminase_MtaD/DadD"/>
</dbReference>
<dbReference type="InterPro" id="IPR011059">
    <property type="entry name" value="Metal-dep_hydrolase_composite"/>
</dbReference>
<dbReference type="InterPro" id="IPR032466">
    <property type="entry name" value="Metal_Hydrolase"/>
</dbReference>
<dbReference type="InterPro" id="IPR050287">
    <property type="entry name" value="MTA/SAH_deaminase"/>
</dbReference>
<dbReference type="NCBIfam" id="NF012037">
    <property type="entry name" value="PRK15493.1"/>
    <property type="match status" value="1"/>
</dbReference>
<dbReference type="PANTHER" id="PTHR43794:SF11">
    <property type="entry name" value="AMIDOHYDROLASE-RELATED DOMAIN-CONTAINING PROTEIN"/>
    <property type="match status" value="1"/>
</dbReference>
<dbReference type="PANTHER" id="PTHR43794">
    <property type="entry name" value="AMINOHYDROLASE SSNA-RELATED"/>
    <property type="match status" value="1"/>
</dbReference>
<dbReference type="Pfam" id="PF01979">
    <property type="entry name" value="Amidohydro_1"/>
    <property type="match status" value="1"/>
</dbReference>
<dbReference type="SUPFAM" id="SSF51338">
    <property type="entry name" value="Composite domain of metallo-dependent hydrolases"/>
    <property type="match status" value="1"/>
</dbReference>
<dbReference type="SUPFAM" id="SSF51556">
    <property type="entry name" value="Metallo-dependent hydrolases"/>
    <property type="match status" value="1"/>
</dbReference>
<feature type="chain" id="PRO_0000312447" description="5-methylthioadenosine/S-adenosylhomocysteine deaminase">
    <location>
        <begin position="1"/>
        <end position="435"/>
    </location>
</feature>
<feature type="binding site" evidence="1">
    <location>
        <position position="65"/>
    </location>
    <ligand>
        <name>Zn(2+)</name>
        <dbReference type="ChEBI" id="CHEBI:29105"/>
    </ligand>
</feature>
<feature type="binding site" evidence="1">
    <location>
        <position position="67"/>
    </location>
    <ligand>
        <name>Zn(2+)</name>
        <dbReference type="ChEBI" id="CHEBI:29105"/>
    </ligand>
</feature>
<feature type="binding site" evidence="1">
    <location>
        <position position="94"/>
    </location>
    <ligand>
        <name>substrate</name>
    </ligand>
</feature>
<feature type="binding site" evidence="1">
    <location>
        <position position="150"/>
    </location>
    <ligand>
        <name>substrate</name>
    </ligand>
</feature>
<feature type="binding site" evidence="1">
    <location>
        <position position="189"/>
    </location>
    <ligand>
        <name>substrate</name>
    </ligand>
</feature>
<feature type="binding site" evidence="1">
    <location>
        <position position="216"/>
    </location>
    <ligand>
        <name>Zn(2+)</name>
        <dbReference type="ChEBI" id="CHEBI:29105"/>
    </ligand>
</feature>
<feature type="binding site" evidence="1">
    <location>
        <position position="219"/>
    </location>
    <ligand>
        <name>substrate</name>
    </ligand>
</feature>
<feature type="binding site" evidence="1">
    <location>
        <position position="304"/>
    </location>
    <ligand>
        <name>substrate</name>
    </ligand>
</feature>
<feature type="binding site" evidence="1">
    <location>
        <position position="304"/>
    </location>
    <ligand>
        <name>Zn(2+)</name>
        <dbReference type="ChEBI" id="CHEBI:29105"/>
    </ligand>
</feature>
<comment type="function">
    <text evidence="1">Catalyzes the deamination of 5-methylthioadenosine and S-adenosyl-L-homocysteine into 5-methylthioinosine and S-inosyl-L-homocysteine, respectively. Is also able to deaminate adenosine.</text>
</comment>
<comment type="catalytic activity">
    <reaction evidence="1">
        <text>S-adenosyl-L-homocysteine + H2O + H(+) = S-inosyl-L-homocysteine + NH4(+)</text>
        <dbReference type="Rhea" id="RHEA:20716"/>
        <dbReference type="ChEBI" id="CHEBI:15377"/>
        <dbReference type="ChEBI" id="CHEBI:15378"/>
        <dbReference type="ChEBI" id="CHEBI:28938"/>
        <dbReference type="ChEBI" id="CHEBI:57856"/>
        <dbReference type="ChEBI" id="CHEBI:57985"/>
        <dbReference type="EC" id="3.5.4.28"/>
    </reaction>
</comment>
<comment type="catalytic activity">
    <reaction evidence="1">
        <text>S-methyl-5'-thioadenosine + H2O + H(+) = S-methyl-5'-thioinosine + NH4(+)</text>
        <dbReference type="Rhea" id="RHEA:25025"/>
        <dbReference type="ChEBI" id="CHEBI:15377"/>
        <dbReference type="ChEBI" id="CHEBI:15378"/>
        <dbReference type="ChEBI" id="CHEBI:17509"/>
        <dbReference type="ChEBI" id="CHEBI:28938"/>
        <dbReference type="ChEBI" id="CHEBI:48595"/>
        <dbReference type="EC" id="3.5.4.31"/>
    </reaction>
</comment>
<comment type="cofactor">
    <cofactor evidence="1">
        <name>Zn(2+)</name>
        <dbReference type="ChEBI" id="CHEBI:29105"/>
    </cofactor>
    <text evidence="1">Binds 1 zinc ion per subunit.</text>
</comment>
<comment type="similarity">
    <text evidence="1">Belongs to the metallo-dependent hydrolases superfamily. MTA/SAH deaminase family.</text>
</comment>
<comment type="sequence caution" evidence="2">
    <conflict type="erroneous initiation">
        <sequence resource="EMBL-CDS" id="ABK84970"/>
    </conflict>
</comment>
<protein>
    <recommendedName>
        <fullName evidence="1">5-methylthioadenosine/S-adenosylhomocysteine deaminase</fullName>
        <shortName evidence="1">MTA/SAH deaminase</shortName>
        <ecNumber evidence="1">3.5.4.28</ecNumber>
        <ecNumber evidence="1">3.5.4.31</ecNumber>
    </recommendedName>
</protein>
<sequence>MKTTYVNATIVTMNEQNEVIENGYIIVENDKIIDVNSGEFASDFEVDEVIDMKGKWVLPGLVNTHTHVVMSLLRGIGDDMLLQPWLETRIWPLESQFTPQIAVASTELGLLEMVKSGTTSFSDMFNPIGVDQDAIMETVSRSGMRAAVSRTLFSFGTKEDEKKAIEEAEKYVKRYYNESGMLTTMVAPHSPYTCSTELLEECARIAVENQTMVHIHLSETEREVRDIEAQYGKRPVEYAASCGLFKRSTVIAHGVVLNDNERAFLAEHDVRVAHNPNSNLKLGSGIANVKAMLEAGIKVGIATDSVASNNNLDMFEEMRIATLLQKGIHQDATALPVETALTLATKGAAEVIGMKQTGSLEVGKCADFITIDPSNKPHLQPADEVLSHLVYAASGKDISDVIINGKRVVWNGECKTLDEERIIFEASRYKRGLQR</sequence>
<keyword id="KW-0378">Hydrolase</keyword>
<keyword id="KW-0479">Metal-binding</keyword>
<keyword id="KW-0862">Zinc</keyword>
<proteinExistence type="inferred from homology"/>
<reference key="1">
    <citation type="journal article" date="2007" name="J. Bacteriol.">
        <title>The complete genome sequence of Bacillus thuringiensis Al Hakam.</title>
        <authorList>
            <person name="Challacombe J.F."/>
            <person name="Altherr M.R."/>
            <person name="Xie G."/>
            <person name="Bhotika S.S."/>
            <person name="Brown N."/>
            <person name="Bruce D."/>
            <person name="Campbell C.S."/>
            <person name="Campbell M.L."/>
            <person name="Chen J."/>
            <person name="Chertkov O."/>
            <person name="Cleland C."/>
            <person name="Dimitrijevic M."/>
            <person name="Doggett N.A."/>
            <person name="Fawcett J.J."/>
            <person name="Glavina T."/>
            <person name="Goodwin L.A."/>
            <person name="Green L.D."/>
            <person name="Han C.S."/>
            <person name="Hill K.K."/>
            <person name="Hitchcock P."/>
            <person name="Jackson P.J."/>
            <person name="Keim P."/>
            <person name="Kewalramani A.R."/>
            <person name="Longmire J."/>
            <person name="Lucas S."/>
            <person name="Malfatti S."/>
            <person name="Martinez D."/>
            <person name="McMurry K."/>
            <person name="Meincke L.J."/>
            <person name="Misra M."/>
            <person name="Moseman B.L."/>
            <person name="Mundt M."/>
            <person name="Munk A.C."/>
            <person name="Okinaka R.T."/>
            <person name="Parson-Quintana B."/>
            <person name="Reilly L.P."/>
            <person name="Richardson P."/>
            <person name="Robinson D.L."/>
            <person name="Saunders E."/>
            <person name="Tapia R."/>
            <person name="Tesmer J.G."/>
            <person name="Thayer N."/>
            <person name="Thompson L.S."/>
            <person name="Tice H."/>
            <person name="Ticknor L.O."/>
            <person name="Wills P.L."/>
            <person name="Gilna P."/>
            <person name="Brettin T.S."/>
        </authorList>
    </citation>
    <scope>NUCLEOTIDE SEQUENCE [LARGE SCALE GENOMIC DNA]</scope>
    <source>
        <strain>Al Hakam</strain>
    </source>
</reference>
<evidence type="ECO:0000255" key="1">
    <source>
        <dbReference type="HAMAP-Rule" id="MF_01281"/>
    </source>
</evidence>
<evidence type="ECO:0000305" key="2"/>
<name>MTAD_BACAH</name>
<gene>
    <name evidence="1" type="primary">mtaD</name>
    <name type="ordered locus">BALH_1643</name>
</gene>